<sequence>MGAYKYLEELQRKKQSDVLRFLQRVRVWEYRQKNVIHRAARPTRPDKARRLGYKAKQGFVIYRVRVRRGNRKRPVPKGATYGKPTNQGVNELKYQRSLRATAEERVGRRAANLRVLNSYWVNQDSTYKYFEVILVDPQHKAIRRDARYNWICDPVHKHREARGLTATGKKSRGINKGHKFNNTKAGRRKTWKRQNTLSLWRYRK</sequence>
<accession>P05748</accession>
<accession>D6VY31</accession>
<reference key="1">
    <citation type="submission" date="1993-03" db="EMBL/GenBank/DDBJ databases">
        <authorList>
            <person name="Tomiyoshi A."/>
            <person name="Suzuki K."/>
            <person name="Otaka E."/>
        </authorList>
    </citation>
    <scope>NUCLEOTIDE SEQUENCE [GENOMIC DNA]</scope>
</reference>
<reference key="2">
    <citation type="journal article" date="1997" name="Nature">
        <title>The nucleotide sequence of Saccharomyces cerevisiae chromosome XII.</title>
        <authorList>
            <person name="Johnston M."/>
            <person name="Hillier L.W."/>
            <person name="Riles L."/>
            <person name="Albermann K."/>
            <person name="Andre B."/>
            <person name="Ansorge W."/>
            <person name="Benes V."/>
            <person name="Brueckner M."/>
            <person name="Delius H."/>
            <person name="Dubois E."/>
            <person name="Duesterhoeft A."/>
            <person name="Entian K.-D."/>
            <person name="Floeth M."/>
            <person name="Goffeau A."/>
            <person name="Hebling U."/>
            <person name="Heumann K."/>
            <person name="Heuss-Neitzel D."/>
            <person name="Hilbert H."/>
            <person name="Hilger F."/>
            <person name="Kleine K."/>
            <person name="Koetter P."/>
            <person name="Louis E.J."/>
            <person name="Messenguy F."/>
            <person name="Mewes H.-W."/>
            <person name="Miosga T."/>
            <person name="Moestl D."/>
            <person name="Mueller-Auer S."/>
            <person name="Nentwich U."/>
            <person name="Obermaier B."/>
            <person name="Piravandi E."/>
            <person name="Pohl T.M."/>
            <person name="Portetelle D."/>
            <person name="Purnelle B."/>
            <person name="Rechmann S."/>
            <person name="Rieger M."/>
            <person name="Rinke M."/>
            <person name="Rose M."/>
            <person name="Scharfe M."/>
            <person name="Scherens B."/>
            <person name="Scholler P."/>
            <person name="Schwager C."/>
            <person name="Schwarz S."/>
            <person name="Underwood A.P."/>
            <person name="Urrestarazu L.A."/>
            <person name="Vandenbol M."/>
            <person name="Verhasselt P."/>
            <person name="Vierendeels F."/>
            <person name="Voet M."/>
            <person name="Volckaert G."/>
            <person name="Voss H."/>
            <person name="Wambutt R."/>
            <person name="Wedler E."/>
            <person name="Wedler H."/>
            <person name="Zimmermann F.K."/>
            <person name="Zollner A."/>
            <person name="Hani J."/>
            <person name="Hoheisel J.D."/>
        </authorList>
    </citation>
    <scope>NUCLEOTIDE SEQUENCE [LARGE SCALE GENOMIC DNA]</scope>
    <source>
        <strain>ATCC 204508 / S288c</strain>
    </source>
</reference>
<reference key="3">
    <citation type="journal article" date="2014" name="G3 (Bethesda)">
        <title>The reference genome sequence of Saccharomyces cerevisiae: Then and now.</title>
        <authorList>
            <person name="Engel S.R."/>
            <person name="Dietrich F.S."/>
            <person name="Fisk D.G."/>
            <person name="Binkley G."/>
            <person name="Balakrishnan R."/>
            <person name="Costanzo M.C."/>
            <person name="Dwight S.S."/>
            <person name="Hitz B.C."/>
            <person name="Karra K."/>
            <person name="Nash R.S."/>
            <person name="Weng S."/>
            <person name="Wong E.D."/>
            <person name="Lloyd P."/>
            <person name="Skrzypek M.S."/>
            <person name="Miyasato S.R."/>
            <person name="Simison M."/>
            <person name="Cherry J.M."/>
        </authorList>
    </citation>
    <scope>GENOME REANNOTATION</scope>
    <source>
        <strain>ATCC 204508 / S288c</strain>
    </source>
</reference>
<reference key="4">
    <citation type="journal article" date="1982" name="Biochemistry">
        <title>Isolation of seventeen proteins and amino-terminal amino acid sequences of eight proteins from cytoplasmic ribosomes of yeast.</title>
        <authorList>
            <person name="Otaka E."/>
            <person name="Higo K."/>
            <person name="Osawa S."/>
        </authorList>
    </citation>
    <scope>PROTEIN SEQUENCE OF 2-44</scope>
</reference>
<reference key="5">
    <citation type="journal article" date="1992" name="J. Biol. Chem.">
        <title>NH2-terminal acetylation of ribosomal proteins of Saccharomyces cerevisiae.</title>
        <authorList>
            <person name="Takakura H."/>
            <person name="Tsunasawa S."/>
            <person name="Miyagi M."/>
            <person name="Warner J.R."/>
        </authorList>
    </citation>
    <scope>PROTEIN SEQUENCE OF 2-9</scope>
</reference>
<reference key="6">
    <citation type="journal article" date="1998" name="Yeast">
        <title>The list of cytoplasmic ribosomal proteins of Saccharomyces cerevisiae.</title>
        <authorList>
            <person name="Planta R.J."/>
            <person name="Mager W.H."/>
        </authorList>
    </citation>
    <scope>NOMENCLATURE</scope>
    <scope>SUBUNIT</scope>
</reference>
<reference key="7">
    <citation type="journal article" date="2012" name="Proc. Natl. Acad. Sci. U.S.A.">
        <title>N-terminal acetylome analyses and functional insights of the N-terminal acetyltransferase NatB.</title>
        <authorList>
            <person name="Van Damme P."/>
            <person name="Lasa M."/>
            <person name="Polevoda B."/>
            <person name="Gazquez C."/>
            <person name="Elosegui-Artola A."/>
            <person name="Kim D.S."/>
            <person name="De Juan-Pardo E."/>
            <person name="Demeyer K."/>
            <person name="Hole K."/>
            <person name="Larrea E."/>
            <person name="Timmerman E."/>
            <person name="Prieto J."/>
            <person name="Arnesen T."/>
            <person name="Sherman F."/>
            <person name="Gevaert K."/>
            <person name="Aldabe R."/>
        </authorList>
    </citation>
    <scope>IDENTIFICATION BY MASS SPECTROMETRY [LARGE SCALE ANALYSIS]</scope>
</reference>
<reference key="8">
    <citation type="journal article" date="2014" name="Curr. Opin. Struct. Biol.">
        <title>A new system for naming ribosomal proteins.</title>
        <authorList>
            <person name="Ban N."/>
            <person name="Beckmann R."/>
            <person name="Cate J.H.D."/>
            <person name="Dinman J.D."/>
            <person name="Dragon F."/>
            <person name="Ellis S.R."/>
            <person name="Lafontaine D.L.J."/>
            <person name="Lindahl L."/>
            <person name="Liljas A."/>
            <person name="Lipton J.M."/>
            <person name="McAlear M.A."/>
            <person name="Moore P.B."/>
            <person name="Noller H.F."/>
            <person name="Ortega J."/>
            <person name="Panse V.G."/>
            <person name="Ramakrishnan V."/>
            <person name="Spahn C.M.T."/>
            <person name="Steitz T.A."/>
            <person name="Tchorzewski M."/>
            <person name="Tollervey D."/>
            <person name="Warren A.J."/>
            <person name="Williamson J.R."/>
            <person name="Wilson D."/>
            <person name="Yonath A."/>
            <person name="Yusupov M."/>
        </authorList>
    </citation>
    <scope>NOMENCLATURE</scope>
</reference>
<reference key="9">
    <citation type="journal article" date="2001" name="Cell">
        <title>Structure of the 80S ribosome from Saccharomyces cerevisiae -- tRNA-ribosome and subunit-subunit interactions.</title>
        <authorList>
            <person name="Spahn C.M.T."/>
            <person name="Beckmann R."/>
            <person name="Eswar N."/>
            <person name="Penczek P.A."/>
            <person name="Sali A."/>
            <person name="Blobel G."/>
            <person name="Frank J."/>
        </authorList>
    </citation>
    <scope>3D-STRUCTURE MODELING OF 3-196</scope>
    <scope>ELECTRON MICROSCOPY</scope>
</reference>
<reference key="10">
    <citation type="journal article" date="2004" name="EMBO J.">
        <title>Domain movements of elongation factor eEF2 and the eukaryotic 80S ribosome facilitate tRNA translocation.</title>
        <authorList>
            <person name="Spahn C.M.T."/>
            <person name="Gomez-Lorenzo M.G."/>
            <person name="Grassucci R.A."/>
            <person name="Joergensen R."/>
            <person name="Andersen G.R."/>
            <person name="Beckmann R."/>
            <person name="Penczek P.A."/>
            <person name="Ballesta J.P.G."/>
            <person name="Frank J."/>
        </authorList>
    </citation>
    <scope>3D-STRUCTURE MODELING</scope>
    <scope>ELECTRON MICROSCOPY</scope>
</reference>
<reference key="11">
    <citation type="journal article" date="2010" name="Science">
        <title>Crystal structure of the eukaryotic ribosome.</title>
        <authorList>
            <person name="Ben-Shem A."/>
            <person name="Jenner L."/>
            <person name="Yusupova G."/>
            <person name="Yusupov M."/>
        </authorList>
    </citation>
    <scope>X-RAY CRYSTALLOGRAPHY (4.0 ANGSTROMS) OF 80S RIBOSOME</scope>
</reference>
<reference key="12">
    <citation type="journal article" date="2011" name="Science">
        <title>The structure of the eukaryotic ribosome at 3.0 A resolution.</title>
        <authorList>
            <person name="Ben-Shem A."/>
            <person name="Garreau de Loubresse N."/>
            <person name="Melnikov S."/>
            <person name="Jenner L."/>
            <person name="Yusupova G."/>
            <person name="Yusupov M."/>
        </authorList>
    </citation>
    <scope>X-RAY CRYSTALLOGRAPHY (3.0 ANGSTROMS) OF 80S RIBOSOME</scope>
    <scope>SUBUNIT</scope>
    <scope>SUBCELLULAR LOCATION</scope>
</reference>
<name>RL15A_YEAST</name>
<organism>
    <name type="scientific">Saccharomyces cerevisiae (strain ATCC 204508 / S288c)</name>
    <name type="common">Baker's yeast</name>
    <dbReference type="NCBI Taxonomy" id="559292"/>
    <lineage>
        <taxon>Eukaryota</taxon>
        <taxon>Fungi</taxon>
        <taxon>Dikarya</taxon>
        <taxon>Ascomycota</taxon>
        <taxon>Saccharomycotina</taxon>
        <taxon>Saccharomycetes</taxon>
        <taxon>Saccharomycetales</taxon>
        <taxon>Saccharomycetaceae</taxon>
        <taxon>Saccharomyces</taxon>
    </lineage>
</organism>
<proteinExistence type="evidence at protein level"/>
<comment type="function">
    <text evidence="8">Component of the ribosome, a large ribonucleoprotein complex responsible for the synthesis of proteins in the cell. The small ribosomal subunit (SSU) binds messenger RNAs (mRNAs) and translates the encoded message by selecting cognate aminoacyl-transfer RNA (tRNA) molecules. The large subunit (LSU) contains the ribosomal catalytic site termed the peptidyl transferase center (PTC), which catalyzes the formation of peptide bonds, thereby polymerizing the amino acids delivered by tRNAs into a polypeptide chain. The nascent polypeptides leave the ribosome through a tunnel in the LSU and interact with protein factors that function in enzymatic processing, targeting, and the membrane insertion of nascent chains at the exit of the ribosomal tunnel.</text>
</comment>
<comment type="subunit">
    <text evidence="3 9">Component of the large ribosomal subunit (LSU). Mature yeast ribosomes consist of a small (40S) and a large (60S) subunit. The 40S small subunit contains 1 molecule of ribosomal RNA (18S rRNA) and 33 different proteins (encoded by 57 genes). The large 60S subunit contains 3 rRNA molecules (25S, 5.8S and 5S rRNA) and 46 different proteins (encoded by 81 genes) (PubMed:22096102, PubMed:9559554).</text>
</comment>
<comment type="subcellular location">
    <subcellularLocation>
        <location evidence="3">Cytoplasm</location>
    </subcellularLocation>
</comment>
<comment type="miscellaneous">
    <text evidence="7">There are 2 genes for eL15 in yeast.</text>
</comment>
<comment type="similarity">
    <text evidence="7">Belongs to the eukaryotic ribosomal protein eL15 family.</text>
</comment>
<keyword id="KW-0002">3D-structure</keyword>
<keyword id="KW-0963">Cytoplasm</keyword>
<keyword id="KW-0903">Direct protein sequencing</keyword>
<keyword id="KW-1185">Reference proteome</keyword>
<keyword id="KW-0687">Ribonucleoprotein</keyword>
<keyword id="KW-0689">Ribosomal protein</keyword>
<dbReference type="EMBL" id="D14675">
    <property type="protein sequence ID" value="BAA03506.1"/>
    <property type="molecule type" value="Genomic_DNA"/>
</dbReference>
<dbReference type="EMBL" id="Z73201">
    <property type="protein sequence ID" value="CAA97553.1"/>
    <property type="molecule type" value="Genomic_DNA"/>
</dbReference>
<dbReference type="EMBL" id="BK006945">
    <property type="protein sequence ID" value="DAA09347.1"/>
    <property type="molecule type" value="Genomic_DNA"/>
</dbReference>
<dbReference type="PIR" id="S48502">
    <property type="entry name" value="S48502"/>
</dbReference>
<dbReference type="RefSeq" id="NP_013129.1">
    <property type="nucleotide sequence ID" value="NM_001181916.1"/>
</dbReference>
<dbReference type="PDB" id="3J6X">
    <property type="method" value="EM"/>
    <property type="resolution" value="6.10 A"/>
    <property type="chains" value="55=1-204"/>
</dbReference>
<dbReference type="PDB" id="3J6Y">
    <property type="method" value="EM"/>
    <property type="resolution" value="6.10 A"/>
    <property type="chains" value="55=1-204"/>
</dbReference>
<dbReference type="PDB" id="3J77">
    <property type="method" value="EM"/>
    <property type="resolution" value="6.20 A"/>
    <property type="chains" value="65=1-204"/>
</dbReference>
<dbReference type="PDB" id="3J78">
    <property type="method" value="EM"/>
    <property type="resolution" value="6.30 A"/>
    <property type="chains" value="65=1-204"/>
</dbReference>
<dbReference type="PDB" id="3JCT">
    <property type="method" value="EM"/>
    <property type="resolution" value="3.08 A"/>
    <property type="chains" value="N=1-204"/>
</dbReference>
<dbReference type="PDB" id="4U3M">
    <property type="method" value="X-ray"/>
    <property type="resolution" value="3.00 A"/>
    <property type="chains" value="M5/m5=2-204"/>
</dbReference>
<dbReference type="PDB" id="4U3N">
    <property type="method" value="X-ray"/>
    <property type="resolution" value="3.20 A"/>
    <property type="chains" value="M5/m5=2-204"/>
</dbReference>
<dbReference type="PDB" id="4U3U">
    <property type="method" value="X-ray"/>
    <property type="resolution" value="2.90 A"/>
    <property type="chains" value="M5/m5=2-204"/>
</dbReference>
<dbReference type="PDB" id="4U4N">
    <property type="method" value="X-ray"/>
    <property type="resolution" value="3.10 A"/>
    <property type="chains" value="M5/m5=2-204"/>
</dbReference>
<dbReference type="PDB" id="4U4O">
    <property type="method" value="X-ray"/>
    <property type="resolution" value="3.60 A"/>
    <property type="chains" value="M5/m5=2-204"/>
</dbReference>
<dbReference type="PDB" id="4U4Q">
    <property type="method" value="X-ray"/>
    <property type="resolution" value="3.00 A"/>
    <property type="chains" value="M5/m5=2-204"/>
</dbReference>
<dbReference type="PDB" id="4U4R">
    <property type="method" value="X-ray"/>
    <property type="resolution" value="2.80 A"/>
    <property type="chains" value="M5/m5=2-204"/>
</dbReference>
<dbReference type="PDB" id="4U4U">
    <property type="method" value="X-ray"/>
    <property type="resolution" value="3.00 A"/>
    <property type="chains" value="M5/m5=2-204"/>
</dbReference>
<dbReference type="PDB" id="4U4Y">
    <property type="method" value="X-ray"/>
    <property type="resolution" value="3.20 A"/>
    <property type="chains" value="M5/m5=2-204"/>
</dbReference>
<dbReference type="PDB" id="4U4Z">
    <property type="method" value="X-ray"/>
    <property type="resolution" value="3.10 A"/>
    <property type="chains" value="M5/m5=2-204"/>
</dbReference>
<dbReference type="PDB" id="4U50">
    <property type="method" value="X-ray"/>
    <property type="resolution" value="3.20 A"/>
    <property type="chains" value="M5/m5=2-204"/>
</dbReference>
<dbReference type="PDB" id="4U51">
    <property type="method" value="X-ray"/>
    <property type="resolution" value="3.20 A"/>
    <property type="chains" value="M5/m5=2-204"/>
</dbReference>
<dbReference type="PDB" id="4U52">
    <property type="method" value="X-ray"/>
    <property type="resolution" value="3.00 A"/>
    <property type="chains" value="M5/m5=2-204"/>
</dbReference>
<dbReference type="PDB" id="4U53">
    <property type="method" value="X-ray"/>
    <property type="resolution" value="3.30 A"/>
    <property type="chains" value="M5/m5=2-204"/>
</dbReference>
<dbReference type="PDB" id="4U55">
    <property type="method" value="X-ray"/>
    <property type="resolution" value="3.20 A"/>
    <property type="chains" value="M5/m5=2-204"/>
</dbReference>
<dbReference type="PDB" id="4U56">
    <property type="method" value="X-ray"/>
    <property type="resolution" value="3.45 A"/>
    <property type="chains" value="M5/m5=2-204"/>
</dbReference>
<dbReference type="PDB" id="4U6F">
    <property type="method" value="X-ray"/>
    <property type="resolution" value="3.10 A"/>
    <property type="chains" value="M5/m5=2-204"/>
</dbReference>
<dbReference type="PDB" id="4V4B">
    <property type="method" value="EM"/>
    <property type="resolution" value="11.70 A"/>
    <property type="chains" value="BL=2-204"/>
</dbReference>
<dbReference type="PDB" id="4V5Z">
    <property type="method" value="EM"/>
    <property type="resolution" value="8.70 A"/>
    <property type="chains" value="Bm=1-203"/>
</dbReference>
<dbReference type="PDB" id="4V6I">
    <property type="method" value="EM"/>
    <property type="resolution" value="8.80 A"/>
    <property type="chains" value="BP=1-204"/>
</dbReference>
<dbReference type="PDB" id="4V7F">
    <property type="method" value="EM"/>
    <property type="resolution" value="8.70 A"/>
    <property type="chains" value="O=1-204"/>
</dbReference>
<dbReference type="PDB" id="4V7R">
    <property type="method" value="X-ray"/>
    <property type="resolution" value="4.00 A"/>
    <property type="chains" value="BO/DO=1-204"/>
</dbReference>
<dbReference type="PDB" id="4V88">
    <property type="method" value="X-ray"/>
    <property type="resolution" value="3.00 A"/>
    <property type="chains" value="BN/DN=1-204"/>
</dbReference>
<dbReference type="PDB" id="4V8T">
    <property type="method" value="EM"/>
    <property type="resolution" value="8.10 A"/>
    <property type="chains" value="N=1-204"/>
</dbReference>
<dbReference type="PDB" id="4V8Y">
    <property type="method" value="EM"/>
    <property type="resolution" value="4.30 A"/>
    <property type="chains" value="BN=2-204"/>
</dbReference>
<dbReference type="PDB" id="4V8Z">
    <property type="method" value="EM"/>
    <property type="resolution" value="6.60 A"/>
    <property type="chains" value="BN=2-204"/>
</dbReference>
<dbReference type="PDB" id="4V91">
    <property type="method" value="EM"/>
    <property type="resolution" value="3.70 A"/>
    <property type="chains" value="N=1-204"/>
</dbReference>
<dbReference type="PDB" id="5APN">
    <property type="method" value="EM"/>
    <property type="resolution" value="3.91 A"/>
    <property type="chains" value="N=1-204"/>
</dbReference>
<dbReference type="PDB" id="5APO">
    <property type="method" value="EM"/>
    <property type="resolution" value="3.41 A"/>
    <property type="chains" value="N=1-204"/>
</dbReference>
<dbReference type="PDB" id="5DAT">
    <property type="method" value="X-ray"/>
    <property type="resolution" value="3.15 A"/>
    <property type="chains" value="M5=2-204, m5=2-204"/>
</dbReference>
<dbReference type="PDB" id="5DC3">
    <property type="method" value="X-ray"/>
    <property type="resolution" value="3.25 A"/>
    <property type="chains" value="M5/m5=2-204"/>
</dbReference>
<dbReference type="PDB" id="5DGE">
    <property type="method" value="X-ray"/>
    <property type="resolution" value="3.45 A"/>
    <property type="chains" value="M5/m5=2-204"/>
</dbReference>
<dbReference type="PDB" id="5DGF">
    <property type="method" value="X-ray"/>
    <property type="resolution" value="3.30 A"/>
    <property type="chains" value="M5/m5=2-204"/>
</dbReference>
<dbReference type="PDB" id="5DGV">
    <property type="method" value="X-ray"/>
    <property type="resolution" value="3.10 A"/>
    <property type="chains" value="M5/m5=2-204"/>
</dbReference>
<dbReference type="PDB" id="5FCI">
    <property type="method" value="X-ray"/>
    <property type="resolution" value="3.40 A"/>
    <property type="chains" value="M5/m5=2-204"/>
</dbReference>
<dbReference type="PDB" id="5FCJ">
    <property type="method" value="X-ray"/>
    <property type="resolution" value="3.10 A"/>
    <property type="chains" value="M5/m5=2-204"/>
</dbReference>
<dbReference type="PDB" id="5GAK">
    <property type="method" value="EM"/>
    <property type="resolution" value="3.88 A"/>
    <property type="chains" value="P=1-204"/>
</dbReference>
<dbReference type="PDB" id="5H4P">
    <property type="method" value="EM"/>
    <property type="resolution" value="3.07 A"/>
    <property type="chains" value="N=1-204"/>
</dbReference>
<dbReference type="PDB" id="5I4L">
    <property type="method" value="X-ray"/>
    <property type="resolution" value="3.10 A"/>
    <property type="chains" value="M5/m5=2-204"/>
</dbReference>
<dbReference type="PDB" id="5JCS">
    <property type="method" value="EM"/>
    <property type="resolution" value="9.50 A"/>
    <property type="chains" value="N=1-204"/>
</dbReference>
<dbReference type="PDB" id="5JUO">
    <property type="method" value="EM"/>
    <property type="resolution" value="4.00 A"/>
    <property type="chains" value="S=1-204"/>
</dbReference>
<dbReference type="PDB" id="5JUP">
    <property type="method" value="EM"/>
    <property type="resolution" value="3.50 A"/>
    <property type="chains" value="S=1-204"/>
</dbReference>
<dbReference type="PDB" id="5JUS">
    <property type="method" value="EM"/>
    <property type="resolution" value="4.20 A"/>
    <property type="chains" value="S=1-204"/>
</dbReference>
<dbReference type="PDB" id="5JUT">
    <property type="method" value="EM"/>
    <property type="resolution" value="4.00 A"/>
    <property type="chains" value="S=1-204"/>
</dbReference>
<dbReference type="PDB" id="5JUU">
    <property type="method" value="EM"/>
    <property type="resolution" value="4.00 A"/>
    <property type="chains" value="S=1-204"/>
</dbReference>
<dbReference type="PDB" id="5LYB">
    <property type="method" value="X-ray"/>
    <property type="resolution" value="3.25 A"/>
    <property type="chains" value="M5/m5=2-204"/>
</dbReference>
<dbReference type="PDB" id="5M1J">
    <property type="method" value="EM"/>
    <property type="resolution" value="3.30 A"/>
    <property type="chains" value="N5=2-204"/>
</dbReference>
<dbReference type="PDB" id="5MC6">
    <property type="method" value="EM"/>
    <property type="resolution" value="3.80 A"/>
    <property type="chains" value="AQ=1-204"/>
</dbReference>
<dbReference type="PDB" id="5MEI">
    <property type="method" value="X-ray"/>
    <property type="resolution" value="3.50 A"/>
    <property type="chains" value="CP/v=2-204"/>
</dbReference>
<dbReference type="PDB" id="5NDG">
    <property type="method" value="X-ray"/>
    <property type="resolution" value="3.70 A"/>
    <property type="chains" value="M5/m5=2-204"/>
</dbReference>
<dbReference type="PDB" id="5NDV">
    <property type="method" value="X-ray"/>
    <property type="resolution" value="3.30 A"/>
    <property type="chains" value="M5/m5=2-204"/>
</dbReference>
<dbReference type="PDB" id="5NDW">
    <property type="method" value="X-ray"/>
    <property type="resolution" value="3.70 A"/>
    <property type="chains" value="M5/m5=2-204"/>
</dbReference>
<dbReference type="PDB" id="5OBM">
    <property type="method" value="X-ray"/>
    <property type="resolution" value="3.40 A"/>
    <property type="chains" value="M5/m5=2-204"/>
</dbReference>
<dbReference type="PDB" id="5ON6">
    <property type="method" value="X-ray"/>
    <property type="resolution" value="3.10 A"/>
    <property type="chains" value="CP/v=2-204"/>
</dbReference>
<dbReference type="PDB" id="5T62">
    <property type="method" value="EM"/>
    <property type="resolution" value="3.30 A"/>
    <property type="chains" value="a=1-204"/>
</dbReference>
<dbReference type="PDB" id="5T6R">
    <property type="method" value="EM"/>
    <property type="resolution" value="4.50 A"/>
    <property type="chains" value="a=1-204"/>
</dbReference>
<dbReference type="PDB" id="5TBW">
    <property type="method" value="X-ray"/>
    <property type="resolution" value="3.00 A"/>
    <property type="chains" value="CP/v=2-204"/>
</dbReference>
<dbReference type="PDB" id="5TGA">
    <property type="method" value="X-ray"/>
    <property type="resolution" value="3.30 A"/>
    <property type="chains" value="M5/m5=2-204"/>
</dbReference>
<dbReference type="PDB" id="5TGM">
    <property type="method" value="X-ray"/>
    <property type="resolution" value="3.50 A"/>
    <property type="chains" value="M5/m5=2-204"/>
</dbReference>
<dbReference type="PDB" id="5Z3G">
    <property type="method" value="EM"/>
    <property type="resolution" value="3.65 A"/>
    <property type="chains" value="R=1-204"/>
</dbReference>
<dbReference type="PDB" id="6C0F">
    <property type="method" value="EM"/>
    <property type="resolution" value="3.70 A"/>
    <property type="chains" value="N=1-204"/>
</dbReference>
<dbReference type="PDB" id="6CB1">
    <property type="method" value="EM"/>
    <property type="resolution" value="4.60 A"/>
    <property type="chains" value="N=1-204"/>
</dbReference>
<dbReference type="PDB" id="6ELZ">
    <property type="method" value="EM"/>
    <property type="resolution" value="3.30 A"/>
    <property type="chains" value="N=1-204"/>
</dbReference>
<dbReference type="PDB" id="6EM1">
    <property type="method" value="EM"/>
    <property type="resolution" value="3.60 A"/>
    <property type="chains" value="N=1-204"/>
</dbReference>
<dbReference type="PDB" id="6EM3">
    <property type="method" value="EM"/>
    <property type="resolution" value="3.20 A"/>
    <property type="chains" value="N=1-204"/>
</dbReference>
<dbReference type="PDB" id="6EM4">
    <property type="method" value="EM"/>
    <property type="resolution" value="4.10 A"/>
    <property type="chains" value="N=1-204"/>
</dbReference>
<dbReference type="PDB" id="6EM5">
    <property type="method" value="EM"/>
    <property type="resolution" value="4.30 A"/>
    <property type="chains" value="N=1-204"/>
</dbReference>
<dbReference type="PDB" id="6FT6">
    <property type="method" value="EM"/>
    <property type="resolution" value="3.90 A"/>
    <property type="chains" value="N=1-204"/>
</dbReference>
<dbReference type="PDB" id="6GQ1">
    <property type="method" value="EM"/>
    <property type="resolution" value="4.40 A"/>
    <property type="chains" value="N=2-204"/>
</dbReference>
<dbReference type="PDB" id="6GQB">
    <property type="method" value="EM"/>
    <property type="resolution" value="3.90 A"/>
    <property type="chains" value="N=2-204"/>
</dbReference>
<dbReference type="PDB" id="6GQV">
    <property type="method" value="EM"/>
    <property type="resolution" value="4.00 A"/>
    <property type="chains" value="N=2-204"/>
</dbReference>
<dbReference type="PDB" id="6HD7">
    <property type="method" value="EM"/>
    <property type="resolution" value="3.40 A"/>
    <property type="chains" value="P=1-204"/>
</dbReference>
<dbReference type="PDB" id="6HHQ">
    <property type="method" value="X-ray"/>
    <property type="resolution" value="3.10 A"/>
    <property type="chains" value="CP/v=1-204"/>
</dbReference>
<dbReference type="PDB" id="6I7O">
    <property type="method" value="EM"/>
    <property type="resolution" value="5.30 A"/>
    <property type="chains" value="AQ/XQ=2-204"/>
</dbReference>
<dbReference type="PDB" id="6M62">
    <property type="method" value="EM"/>
    <property type="resolution" value="3.20 A"/>
    <property type="chains" value="N=1-204"/>
</dbReference>
<dbReference type="PDB" id="6N8J">
    <property type="method" value="EM"/>
    <property type="resolution" value="3.50 A"/>
    <property type="chains" value="N=1-204"/>
</dbReference>
<dbReference type="PDB" id="6N8K">
    <property type="method" value="EM"/>
    <property type="resolution" value="3.60 A"/>
    <property type="chains" value="N=1-204"/>
</dbReference>
<dbReference type="PDB" id="6N8L">
    <property type="method" value="EM"/>
    <property type="resolution" value="3.60 A"/>
    <property type="chains" value="N=1-204"/>
</dbReference>
<dbReference type="PDB" id="6N8M">
    <property type="method" value="EM"/>
    <property type="resolution" value="3.50 A"/>
    <property type="chains" value="a=1-204"/>
</dbReference>
<dbReference type="PDB" id="6N8N">
    <property type="method" value="EM"/>
    <property type="resolution" value="3.80 A"/>
    <property type="chains" value="a=1-204"/>
</dbReference>
<dbReference type="PDB" id="6N8O">
    <property type="method" value="EM"/>
    <property type="resolution" value="3.50 A"/>
    <property type="chains" value="a=1-204"/>
</dbReference>
<dbReference type="PDB" id="6OIG">
    <property type="method" value="EM"/>
    <property type="resolution" value="3.80 A"/>
    <property type="chains" value="N=2-204"/>
</dbReference>
<dbReference type="PDB" id="6Q8Y">
    <property type="method" value="EM"/>
    <property type="resolution" value="3.10 A"/>
    <property type="chains" value="AQ=2-204"/>
</dbReference>
<dbReference type="PDB" id="6QIK">
    <property type="method" value="EM"/>
    <property type="resolution" value="3.10 A"/>
    <property type="chains" value="O=1-204"/>
</dbReference>
<dbReference type="PDB" id="6QT0">
    <property type="method" value="EM"/>
    <property type="resolution" value="3.40 A"/>
    <property type="chains" value="O=1-204"/>
</dbReference>
<dbReference type="PDB" id="6QTZ">
    <property type="method" value="EM"/>
    <property type="resolution" value="3.50 A"/>
    <property type="chains" value="O=1-204"/>
</dbReference>
<dbReference type="PDB" id="6R84">
    <property type="method" value="EM"/>
    <property type="resolution" value="3.60 A"/>
    <property type="chains" value="p=2-204"/>
</dbReference>
<dbReference type="PDB" id="6R86">
    <property type="method" value="EM"/>
    <property type="resolution" value="3.40 A"/>
    <property type="chains" value="p=2-204"/>
</dbReference>
<dbReference type="PDB" id="6R87">
    <property type="method" value="EM"/>
    <property type="resolution" value="3.40 A"/>
    <property type="chains" value="p=2-204"/>
</dbReference>
<dbReference type="PDB" id="6RI5">
    <property type="method" value="EM"/>
    <property type="resolution" value="3.30 A"/>
    <property type="chains" value="O=1-204"/>
</dbReference>
<dbReference type="PDB" id="6RZZ">
    <property type="method" value="EM"/>
    <property type="resolution" value="3.20 A"/>
    <property type="chains" value="O=1-204"/>
</dbReference>
<dbReference type="PDB" id="6S05">
    <property type="method" value="EM"/>
    <property type="resolution" value="3.90 A"/>
    <property type="chains" value="O=1-204"/>
</dbReference>
<dbReference type="PDB" id="6S47">
    <property type="method" value="EM"/>
    <property type="resolution" value="3.28 A"/>
    <property type="chains" value="AP=2-204"/>
</dbReference>
<dbReference type="PDB" id="6SNT">
    <property type="method" value="EM"/>
    <property type="resolution" value="2.80 A"/>
    <property type="chains" value="t=1-204"/>
</dbReference>
<dbReference type="PDB" id="6SV4">
    <property type="method" value="EM"/>
    <property type="resolution" value="3.30 A"/>
    <property type="chains" value="AQ/XQ/zQ=1-204"/>
</dbReference>
<dbReference type="PDB" id="6T4Q">
    <property type="method" value="EM"/>
    <property type="resolution" value="2.60 A"/>
    <property type="chains" value="LN=2-204"/>
</dbReference>
<dbReference type="PDB" id="6T7I">
    <property type="method" value="EM"/>
    <property type="resolution" value="3.20 A"/>
    <property type="chains" value="LN=1-204"/>
</dbReference>
<dbReference type="PDB" id="6T7T">
    <property type="method" value="EM"/>
    <property type="resolution" value="3.10 A"/>
    <property type="chains" value="LN=1-204"/>
</dbReference>
<dbReference type="PDB" id="6T83">
    <property type="method" value="EM"/>
    <property type="resolution" value="4.00 A"/>
    <property type="chains" value="Ny/Pa=1-204"/>
</dbReference>
<dbReference type="PDB" id="6TB3">
    <property type="method" value="EM"/>
    <property type="resolution" value="2.80 A"/>
    <property type="chains" value="AQ=2-204"/>
</dbReference>
<dbReference type="PDB" id="6TNU">
    <property type="method" value="EM"/>
    <property type="resolution" value="3.10 A"/>
    <property type="chains" value="AQ=2-204"/>
</dbReference>
<dbReference type="PDB" id="6WOO">
    <property type="method" value="EM"/>
    <property type="resolution" value="2.90 A"/>
    <property type="chains" value="N=2-203"/>
</dbReference>
<dbReference type="PDB" id="6XIQ">
    <property type="method" value="EM"/>
    <property type="resolution" value="4.20 A"/>
    <property type="chains" value="N=1-204"/>
</dbReference>
<dbReference type="PDB" id="6XIR">
    <property type="method" value="EM"/>
    <property type="resolution" value="3.20 A"/>
    <property type="chains" value="N=1-204"/>
</dbReference>
<dbReference type="PDB" id="6YLG">
    <property type="method" value="EM"/>
    <property type="resolution" value="3.00 A"/>
    <property type="chains" value="N=1-204"/>
</dbReference>
<dbReference type="PDB" id="6YLH">
    <property type="method" value="EM"/>
    <property type="resolution" value="3.10 A"/>
    <property type="chains" value="N=1-204"/>
</dbReference>
<dbReference type="PDB" id="6YLX">
    <property type="method" value="EM"/>
    <property type="resolution" value="3.90 A"/>
    <property type="chains" value="N=1-204"/>
</dbReference>
<dbReference type="PDB" id="6YLY">
    <property type="method" value="EM"/>
    <property type="resolution" value="3.80 A"/>
    <property type="chains" value="N=1-204"/>
</dbReference>
<dbReference type="PDB" id="6Z6J">
    <property type="method" value="EM"/>
    <property type="resolution" value="3.40 A"/>
    <property type="chains" value="LN=1-204"/>
</dbReference>
<dbReference type="PDB" id="6Z6K">
    <property type="method" value="EM"/>
    <property type="resolution" value="3.40 A"/>
    <property type="chains" value="LN=1-204"/>
</dbReference>
<dbReference type="PDB" id="7AZY">
    <property type="method" value="EM"/>
    <property type="resolution" value="2.88 A"/>
    <property type="chains" value="R=1-204"/>
</dbReference>
<dbReference type="PDB" id="7B7D">
    <property type="method" value="EM"/>
    <property type="resolution" value="3.30 A"/>
    <property type="chains" value="LP=2-204"/>
</dbReference>
<dbReference type="PDB" id="7BT6">
    <property type="method" value="EM"/>
    <property type="resolution" value="3.12 A"/>
    <property type="chains" value="N=1-204"/>
</dbReference>
<dbReference type="PDB" id="7BTB">
    <property type="method" value="EM"/>
    <property type="resolution" value="3.22 A"/>
    <property type="chains" value="N=1-204"/>
</dbReference>
<dbReference type="PDB" id="7MPI">
    <property type="method" value="EM"/>
    <property type="resolution" value="3.05 A"/>
    <property type="chains" value="AN=2-204"/>
</dbReference>
<dbReference type="PDB" id="7MPJ">
    <property type="method" value="EM"/>
    <property type="resolution" value="2.70 A"/>
    <property type="chains" value="AN=2-204"/>
</dbReference>
<dbReference type="PDB" id="7N8B">
    <property type="method" value="EM"/>
    <property type="resolution" value="3.05 A"/>
    <property type="chains" value="AN=2-204"/>
</dbReference>
<dbReference type="PDB" id="7NAC">
    <property type="method" value="EM"/>
    <property type="resolution" value="3.04 A"/>
    <property type="chains" value="N=1-204"/>
</dbReference>
<dbReference type="PDB" id="7NRC">
    <property type="method" value="EM"/>
    <property type="resolution" value="3.90 A"/>
    <property type="chains" value="LP=2-204"/>
</dbReference>
<dbReference type="PDB" id="7NRD">
    <property type="method" value="EM"/>
    <property type="resolution" value="4.36 A"/>
    <property type="chains" value="LP=2-204"/>
</dbReference>
<dbReference type="PDB" id="7OF1">
    <property type="method" value="EM"/>
    <property type="resolution" value="3.10 A"/>
    <property type="chains" value="N=1-204"/>
</dbReference>
<dbReference type="PDB" id="7OH3">
    <property type="method" value="EM"/>
    <property type="resolution" value="3.40 A"/>
    <property type="chains" value="N=1-204"/>
</dbReference>
<dbReference type="PDB" id="7OHP">
    <property type="method" value="EM"/>
    <property type="resolution" value="3.90 A"/>
    <property type="chains" value="N=1-204"/>
</dbReference>
<dbReference type="PDB" id="7OHQ">
    <property type="method" value="EM"/>
    <property type="resolution" value="3.10 A"/>
    <property type="chains" value="N=1-204"/>
</dbReference>
<dbReference type="PDB" id="7OHR">
    <property type="method" value="EM"/>
    <property type="resolution" value="4.72 A"/>
    <property type="chains" value="N=1-204"/>
</dbReference>
<dbReference type="PDB" id="7OHS">
    <property type="method" value="EM"/>
    <property type="resolution" value="4.38 A"/>
    <property type="chains" value="N=1-204"/>
</dbReference>
<dbReference type="PDB" id="7OHU">
    <property type="method" value="EM"/>
    <property type="resolution" value="3.70 A"/>
    <property type="chains" value="N=1-204"/>
</dbReference>
<dbReference type="PDB" id="7OHV">
    <property type="method" value="EM"/>
    <property type="resolution" value="3.90 A"/>
    <property type="chains" value="N=1-204"/>
</dbReference>
<dbReference type="PDB" id="7OHW">
    <property type="method" value="EM"/>
    <property type="resolution" value="3.50 A"/>
    <property type="chains" value="N=1-204"/>
</dbReference>
<dbReference type="PDB" id="7OHX">
    <property type="method" value="EM"/>
    <property type="resolution" value="3.30 A"/>
    <property type="chains" value="N=1-204"/>
</dbReference>
<dbReference type="PDB" id="7OHY">
    <property type="method" value="EM"/>
    <property type="resolution" value="3.90 A"/>
    <property type="chains" value="N=1-204"/>
</dbReference>
<dbReference type="PDB" id="7OSA">
    <property type="method" value="X-ray"/>
    <property type="resolution" value="3.00 A"/>
    <property type="chains" value="eL15=1-204"/>
</dbReference>
<dbReference type="PDB" id="7OSM">
    <property type="method" value="X-ray"/>
    <property type="resolution" value="3.00 A"/>
    <property type="chains" value="eL15=1-204"/>
</dbReference>
<dbReference type="PDB" id="7R6K">
    <property type="method" value="EM"/>
    <property type="resolution" value="3.17 A"/>
    <property type="chains" value="N=1-204"/>
</dbReference>
<dbReference type="PDB" id="7R6Q">
    <property type="method" value="EM"/>
    <property type="resolution" value="2.98 A"/>
    <property type="chains" value="N=1-204"/>
</dbReference>
<dbReference type="PDB" id="7R7A">
    <property type="method" value="EM"/>
    <property type="resolution" value="3.04 A"/>
    <property type="chains" value="N=1-204"/>
</dbReference>
<dbReference type="PDB" id="7RR5">
    <property type="method" value="EM"/>
    <property type="resolution" value="3.23 A"/>
    <property type="chains" value="LN=1-204"/>
</dbReference>
<dbReference type="PDB" id="7TOO">
    <property type="method" value="EM"/>
    <property type="resolution" value="2.70 A"/>
    <property type="chains" value="AL15=1-204"/>
</dbReference>
<dbReference type="PDB" id="7TOP">
    <property type="method" value="EM"/>
    <property type="resolution" value="2.40 A"/>
    <property type="chains" value="AL15=1-204"/>
</dbReference>
<dbReference type="PDB" id="7U0H">
    <property type="method" value="EM"/>
    <property type="resolution" value="2.76 A"/>
    <property type="chains" value="N=1-204"/>
</dbReference>
<dbReference type="PDB" id="7UG6">
    <property type="method" value="EM"/>
    <property type="resolution" value="2.90 A"/>
    <property type="chains" value="N=1-204"/>
</dbReference>
<dbReference type="PDB" id="7UOO">
    <property type="method" value="EM"/>
    <property type="resolution" value="2.34 A"/>
    <property type="chains" value="N=1-204"/>
</dbReference>
<dbReference type="PDB" id="7UQB">
    <property type="method" value="EM"/>
    <property type="resolution" value="2.43 A"/>
    <property type="chains" value="N=1-204"/>
</dbReference>
<dbReference type="PDB" id="7UQZ">
    <property type="method" value="EM"/>
    <property type="resolution" value="2.44 A"/>
    <property type="chains" value="N=2-204"/>
</dbReference>
<dbReference type="PDB" id="7V08">
    <property type="method" value="EM"/>
    <property type="resolution" value="2.36 A"/>
    <property type="chains" value="N=1-204"/>
</dbReference>
<dbReference type="PDB" id="7Z34">
    <property type="method" value="EM"/>
    <property type="resolution" value="3.80 A"/>
    <property type="chains" value="N=1-204"/>
</dbReference>
<dbReference type="PDB" id="7ZPQ">
    <property type="method" value="EM"/>
    <property type="resolution" value="3.47 A"/>
    <property type="chains" value="BM=2-204"/>
</dbReference>
<dbReference type="PDB" id="7ZRS">
    <property type="method" value="EM"/>
    <property type="resolution" value="4.80 A"/>
    <property type="chains" value="BM=2-204"/>
</dbReference>
<dbReference type="PDB" id="7ZS5">
    <property type="method" value="EM"/>
    <property type="resolution" value="3.20 A"/>
    <property type="chains" value="BO=2-204"/>
</dbReference>
<dbReference type="PDB" id="7ZUW">
    <property type="method" value="EM"/>
    <property type="resolution" value="4.30 A"/>
    <property type="chains" value="BM=2-204"/>
</dbReference>
<dbReference type="PDB" id="7ZUX">
    <property type="method" value="EM"/>
    <property type="resolution" value="2.50 A"/>
    <property type="chains" value="EM=2-204"/>
</dbReference>
<dbReference type="PDB" id="7ZW0">
    <property type="method" value="EM"/>
    <property type="resolution" value="2.40 A"/>
    <property type="chains" value="LQ=1-204"/>
</dbReference>
<dbReference type="PDB" id="8AAF">
    <property type="method" value="EM"/>
    <property type="resolution" value="2.50 A"/>
    <property type="chains" value="A=1-204"/>
</dbReference>
<dbReference type="PDB" id="8AGT">
    <property type="method" value="EM"/>
    <property type="resolution" value="2.60 A"/>
    <property type="chains" value="A=1-204"/>
</dbReference>
<dbReference type="PDB" id="8AGU">
    <property type="method" value="EM"/>
    <property type="resolution" value="2.70 A"/>
    <property type="chains" value="A=1-204"/>
</dbReference>
<dbReference type="PDB" id="8AGV">
    <property type="method" value="EM"/>
    <property type="resolution" value="2.60 A"/>
    <property type="chains" value="A=1-204"/>
</dbReference>
<dbReference type="PDB" id="8AGW">
    <property type="method" value="EM"/>
    <property type="resolution" value="2.60 A"/>
    <property type="chains" value="A=1-204"/>
</dbReference>
<dbReference type="PDB" id="8AGX">
    <property type="method" value="EM"/>
    <property type="resolution" value="2.40 A"/>
    <property type="chains" value="A=1-204"/>
</dbReference>
<dbReference type="PDB" id="8AGZ">
    <property type="method" value="EM"/>
    <property type="resolution" value="2.60 A"/>
    <property type="chains" value="A=1-204"/>
</dbReference>
<dbReference type="PDB" id="8BIP">
    <property type="method" value="EM"/>
    <property type="resolution" value="3.10 A"/>
    <property type="chains" value="LN=2-204"/>
</dbReference>
<dbReference type="PDB" id="8BJQ">
    <property type="method" value="EM"/>
    <property type="resolution" value="3.80 A"/>
    <property type="chains" value="LN=2-204"/>
</dbReference>
<dbReference type="PDB" id="8BN3">
    <property type="method" value="EM"/>
    <property type="resolution" value="2.40 A"/>
    <property type="chains" value="M5=2-203"/>
</dbReference>
<dbReference type="PDB" id="8BQD">
    <property type="method" value="EM"/>
    <property type="resolution" value="3.90 A"/>
    <property type="chains" value="AQ=2-204"/>
</dbReference>
<dbReference type="PDB" id="8BQX">
    <property type="method" value="EM"/>
    <property type="resolution" value="3.80 A"/>
    <property type="chains" value="AQ=2-204"/>
</dbReference>
<dbReference type="PDB" id="8CCS">
    <property type="method" value="EM"/>
    <property type="resolution" value="1.97 A"/>
    <property type="chains" value="QQ=1-204"/>
</dbReference>
<dbReference type="PDB" id="8CDL">
    <property type="method" value="EM"/>
    <property type="resolution" value="2.72 A"/>
    <property type="chains" value="QQ=1-204"/>
</dbReference>
<dbReference type="PDB" id="8CDR">
    <property type="method" value="EM"/>
    <property type="resolution" value="2.04 A"/>
    <property type="chains" value="QQ=1-204"/>
</dbReference>
<dbReference type="PDB" id="8CEH">
    <property type="method" value="EM"/>
    <property type="resolution" value="2.05 A"/>
    <property type="chains" value="QQ=1-204"/>
</dbReference>
<dbReference type="PDB" id="8CF5">
    <property type="method" value="EM"/>
    <property type="resolution" value="2.71 A"/>
    <property type="chains" value="QQ=1-204"/>
</dbReference>
<dbReference type="PDB" id="8CG8">
    <property type="method" value="EM"/>
    <property type="resolution" value="2.57 A"/>
    <property type="chains" value="QQ=1-204"/>
</dbReference>
<dbReference type="PDB" id="8CGN">
    <property type="method" value="EM"/>
    <property type="resolution" value="2.28 A"/>
    <property type="chains" value="QQ=1-204"/>
</dbReference>
<dbReference type="PDB" id="8CIV">
    <property type="method" value="EM"/>
    <property type="resolution" value="2.47 A"/>
    <property type="chains" value="QQ=1-204"/>
</dbReference>
<dbReference type="PDB" id="8CKU">
    <property type="method" value="EM"/>
    <property type="resolution" value="3.11 A"/>
    <property type="chains" value="QQ=1-204"/>
</dbReference>
<dbReference type="PDB" id="8CMJ">
    <property type="method" value="EM"/>
    <property type="resolution" value="3.79 A"/>
    <property type="chains" value="QQ=1-204"/>
</dbReference>
<dbReference type="PDB" id="8E5T">
    <property type="method" value="EM"/>
    <property type="resolution" value="4.00 A"/>
    <property type="chains" value="N=1-204"/>
</dbReference>
<dbReference type="PDB" id="8EUB">
    <property type="method" value="EM"/>
    <property type="resolution" value="2.52 A"/>
    <property type="chains" value="AN=1-204"/>
</dbReference>
<dbReference type="PDB" id="8EVP">
    <property type="method" value="EM"/>
    <property type="resolution" value="2.38 A"/>
    <property type="chains" value="AN=1-204"/>
</dbReference>
<dbReference type="PDB" id="8EVQ">
    <property type="method" value="EM"/>
    <property type="resolution" value="2.72 A"/>
    <property type="chains" value="AN=1-204"/>
</dbReference>
<dbReference type="PDB" id="8EVR">
    <property type="method" value="EM"/>
    <property type="resolution" value="2.87 A"/>
    <property type="chains" value="AN=1-204"/>
</dbReference>
<dbReference type="PDB" id="8EVS">
    <property type="method" value="EM"/>
    <property type="resolution" value="2.62 A"/>
    <property type="chains" value="AN=1-204"/>
</dbReference>
<dbReference type="PDB" id="8EVT">
    <property type="method" value="EM"/>
    <property type="resolution" value="2.20 A"/>
    <property type="chains" value="AN=1-204"/>
</dbReference>
<dbReference type="PDB" id="8EWB">
    <property type="method" value="EM"/>
    <property type="resolution" value="2.87 A"/>
    <property type="chains" value="AN=1-204"/>
</dbReference>
<dbReference type="PDB" id="8EWC">
    <property type="method" value="EM"/>
    <property type="resolution" value="2.45 A"/>
    <property type="chains" value="AN=1-204"/>
</dbReference>
<dbReference type="PDB" id="8HFR">
    <property type="method" value="EM"/>
    <property type="resolution" value="2.64 A"/>
    <property type="chains" value="No=1-204"/>
</dbReference>
<dbReference type="PDB" id="8K2D">
    <property type="method" value="EM"/>
    <property type="resolution" value="3.20 A"/>
    <property type="chains" value="LN=1-204"/>
</dbReference>
<dbReference type="PDB" id="8K82">
    <property type="method" value="EM"/>
    <property type="resolution" value="3.00 A"/>
    <property type="chains" value="LN=1-204"/>
</dbReference>
<dbReference type="PDB" id="8P4V">
    <property type="method" value="X-ray"/>
    <property type="resolution" value="3.16 A"/>
    <property type="chains" value="CP/v=1-204"/>
</dbReference>
<dbReference type="PDB" id="8P8M">
    <property type="method" value="EM"/>
    <property type="resolution" value="2.66 A"/>
    <property type="chains" value="JV=1-204"/>
</dbReference>
<dbReference type="PDB" id="8P8N">
    <property type="method" value="EM"/>
    <property type="resolution" value="2.15 A"/>
    <property type="chains" value="JV=1-204"/>
</dbReference>
<dbReference type="PDB" id="8P8U">
    <property type="method" value="EM"/>
    <property type="resolution" value="2.23 A"/>
    <property type="chains" value="JV=1-204"/>
</dbReference>
<dbReference type="PDB" id="8P9A">
    <property type="method" value="X-ray"/>
    <property type="resolution" value="2.90 A"/>
    <property type="chains" value="CP/v=1-204"/>
</dbReference>
<dbReference type="PDB" id="8PFR">
    <property type="method" value="EM"/>
    <property type="resolution" value="2.15 A"/>
    <property type="chains" value="JV=1-204"/>
</dbReference>
<dbReference type="PDB" id="8T2X">
    <property type="method" value="EM"/>
    <property type="resolution" value="2.46 A"/>
    <property type="chains" value="AN=1-204"/>
</dbReference>
<dbReference type="PDB" id="8T2Y">
    <property type="method" value="EM"/>
    <property type="resolution" value="2.20 A"/>
    <property type="chains" value="AN=1-204"/>
</dbReference>
<dbReference type="PDB" id="8T2Z">
    <property type="method" value="EM"/>
    <property type="resolution" value="2.40 A"/>
    <property type="chains" value="AN=1-204"/>
</dbReference>
<dbReference type="PDB" id="8T30">
    <property type="method" value="EM"/>
    <property type="resolution" value="2.88 A"/>
    <property type="chains" value="AN=1-204"/>
</dbReference>
<dbReference type="PDB" id="8T3A">
    <property type="method" value="EM"/>
    <property type="resolution" value="2.86 A"/>
    <property type="chains" value="AN=1-204"/>
</dbReference>
<dbReference type="PDB" id="8T3B">
    <property type="method" value="EM"/>
    <property type="resolution" value="3.08 A"/>
    <property type="chains" value="AN=1-204"/>
</dbReference>
<dbReference type="PDB" id="8T3C">
    <property type="method" value="EM"/>
    <property type="resolution" value="3.86 A"/>
    <property type="chains" value="AN=1-204"/>
</dbReference>
<dbReference type="PDB" id="8T3D">
    <property type="method" value="EM"/>
    <property type="resolution" value="2.95 A"/>
    <property type="chains" value="AN=1-204"/>
</dbReference>
<dbReference type="PDB" id="8T3E">
    <property type="method" value="EM"/>
    <property type="resolution" value="3.04 A"/>
    <property type="chains" value="AN=1-204"/>
</dbReference>
<dbReference type="PDB" id="8T3F">
    <property type="method" value="EM"/>
    <property type="resolution" value="3.09 A"/>
    <property type="chains" value="AN=1-204"/>
</dbReference>
<dbReference type="PDB" id="8UT0">
    <property type="method" value="EM"/>
    <property type="resolution" value="3.22 A"/>
    <property type="chains" value="LP=2-204"/>
</dbReference>
<dbReference type="PDB" id="8UTI">
    <property type="method" value="EM"/>
    <property type="resolution" value="3.13 A"/>
    <property type="chains" value="LP=2-204"/>
</dbReference>
<dbReference type="PDB" id="8V83">
    <property type="method" value="EM"/>
    <property type="resolution" value="2.53 A"/>
    <property type="chains" value="N=1-204"/>
</dbReference>
<dbReference type="PDB" id="8V84">
    <property type="method" value="EM"/>
    <property type="resolution" value="2.70 A"/>
    <property type="chains" value="N=1-204"/>
</dbReference>
<dbReference type="PDB" id="8V87">
    <property type="method" value="EM"/>
    <property type="resolution" value="2.66 A"/>
    <property type="chains" value="N=1-204"/>
</dbReference>
<dbReference type="PDB" id="8XU8">
    <property type="method" value="EM"/>
    <property type="resolution" value="3.40 A"/>
    <property type="chains" value="P=2-204"/>
</dbReference>
<dbReference type="PDB" id="8Y0U">
    <property type="method" value="EM"/>
    <property type="resolution" value="3.59 A"/>
    <property type="chains" value="LN=1-204"/>
</dbReference>
<dbReference type="PDB" id="8YLD">
    <property type="method" value="EM"/>
    <property type="resolution" value="3.90 A"/>
    <property type="chains" value="P=2-204"/>
</dbReference>
<dbReference type="PDB" id="8YLR">
    <property type="method" value="EM"/>
    <property type="resolution" value="3.90 A"/>
    <property type="chains" value="P=2-204"/>
</dbReference>
<dbReference type="PDB" id="8Z70">
    <property type="method" value="EM"/>
    <property type="resolution" value="3.20 A"/>
    <property type="chains" value="P=2-204"/>
</dbReference>
<dbReference type="PDB" id="8Z71">
    <property type="method" value="EM"/>
    <property type="resolution" value="3.60 A"/>
    <property type="chains" value="P=2-204"/>
</dbReference>
<dbReference type="PDB" id="9F9S">
    <property type="method" value="EM"/>
    <property type="resolution" value="2.90 A"/>
    <property type="chains" value="LI/MI=1-204"/>
</dbReference>
<dbReference type="PDBsum" id="3J6X"/>
<dbReference type="PDBsum" id="3J6Y"/>
<dbReference type="PDBsum" id="3J77"/>
<dbReference type="PDBsum" id="3J78"/>
<dbReference type="PDBsum" id="3JCT"/>
<dbReference type="PDBsum" id="4U3M"/>
<dbReference type="PDBsum" id="4U3N"/>
<dbReference type="PDBsum" id="4U3U"/>
<dbReference type="PDBsum" id="4U4N"/>
<dbReference type="PDBsum" id="4U4O"/>
<dbReference type="PDBsum" id="4U4Q"/>
<dbReference type="PDBsum" id="4U4R"/>
<dbReference type="PDBsum" id="4U4U"/>
<dbReference type="PDBsum" id="4U4Y"/>
<dbReference type="PDBsum" id="4U4Z"/>
<dbReference type="PDBsum" id="4U50"/>
<dbReference type="PDBsum" id="4U51"/>
<dbReference type="PDBsum" id="4U52"/>
<dbReference type="PDBsum" id="4U53"/>
<dbReference type="PDBsum" id="4U55"/>
<dbReference type="PDBsum" id="4U56"/>
<dbReference type="PDBsum" id="4U6F"/>
<dbReference type="PDBsum" id="4V4B"/>
<dbReference type="PDBsum" id="4V5Z"/>
<dbReference type="PDBsum" id="4V6I"/>
<dbReference type="PDBsum" id="4V7F"/>
<dbReference type="PDBsum" id="4V7R"/>
<dbReference type="PDBsum" id="4V88"/>
<dbReference type="PDBsum" id="4V8T"/>
<dbReference type="PDBsum" id="4V8Y"/>
<dbReference type="PDBsum" id="4V8Z"/>
<dbReference type="PDBsum" id="4V91"/>
<dbReference type="PDBsum" id="5APN"/>
<dbReference type="PDBsum" id="5APO"/>
<dbReference type="PDBsum" id="5DAT"/>
<dbReference type="PDBsum" id="5DC3"/>
<dbReference type="PDBsum" id="5DGE"/>
<dbReference type="PDBsum" id="5DGF"/>
<dbReference type="PDBsum" id="5DGV"/>
<dbReference type="PDBsum" id="5FCI"/>
<dbReference type="PDBsum" id="5FCJ"/>
<dbReference type="PDBsum" id="5GAK"/>
<dbReference type="PDBsum" id="5H4P"/>
<dbReference type="PDBsum" id="5I4L"/>
<dbReference type="PDBsum" id="5JCS"/>
<dbReference type="PDBsum" id="5JUO"/>
<dbReference type="PDBsum" id="5JUP"/>
<dbReference type="PDBsum" id="5JUS"/>
<dbReference type="PDBsum" id="5JUT"/>
<dbReference type="PDBsum" id="5JUU"/>
<dbReference type="PDBsum" id="5LYB"/>
<dbReference type="PDBsum" id="5M1J"/>
<dbReference type="PDBsum" id="5MC6"/>
<dbReference type="PDBsum" id="5MEI"/>
<dbReference type="PDBsum" id="5NDG"/>
<dbReference type="PDBsum" id="5NDV"/>
<dbReference type="PDBsum" id="5NDW"/>
<dbReference type="PDBsum" id="5OBM"/>
<dbReference type="PDBsum" id="5ON6"/>
<dbReference type="PDBsum" id="5T62"/>
<dbReference type="PDBsum" id="5T6R"/>
<dbReference type="PDBsum" id="5TBW"/>
<dbReference type="PDBsum" id="5TGA"/>
<dbReference type="PDBsum" id="5TGM"/>
<dbReference type="PDBsum" id="5Z3G"/>
<dbReference type="PDBsum" id="6C0F"/>
<dbReference type="PDBsum" id="6CB1"/>
<dbReference type="PDBsum" id="6ELZ"/>
<dbReference type="PDBsum" id="6EM1"/>
<dbReference type="PDBsum" id="6EM3"/>
<dbReference type="PDBsum" id="6EM4"/>
<dbReference type="PDBsum" id="6EM5"/>
<dbReference type="PDBsum" id="6FT6"/>
<dbReference type="PDBsum" id="6GQ1"/>
<dbReference type="PDBsum" id="6GQB"/>
<dbReference type="PDBsum" id="6GQV"/>
<dbReference type="PDBsum" id="6HD7"/>
<dbReference type="PDBsum" id="6HHQ"/>
<dbReference type="PDBsum" id="6I7O"/>
<dbReference type="PDBsum" id="6M62"/>
<dbReference type="PDBsum" id="6N8J"/>
<dbReference type="PDBsum" id="6N8K"/>
<dbReference type="PDBsum" id="6N8L"/>
<dbReference type="PDBsum" id="6N8M"/>
<dbReference type="PDBsum" id="6N8N"/>
<dbReference type="PDBsum" id="6N8O"/>
<dbReference type="PDBsum" id="6OIG"/>
<dbReference type="PDBsum" id="6Q8Y"/>
<dbReference type="PDBsum" id="6QIK"/>
<dbReference type="PDBsum" id="6QT0"/>
<dbReference type="PDBsum" id="6QTZ"/>
<dbReference type="PDBsum" id="6R84"/>
<dbReference type="PDBsum" id="6R86"/>
<dbReference type="PDBsum" id="6R87"/>
<dbReference type="PDBsum" id="6RI5"/>
<dbReference type="PDBsum" id="6RZZ"/>
<dbReference type="PDBsum" id="6S05"/>
<dbReference type="PDBsum" id="6S47"/>
<dbReference type="PDBsum" id="6SNT"/>
<dbReference type="PDBsum" id="6SV4"/>
<dbReference type="PDBsum" id="6T4Q"/>
<dbReference type="PDBsum" id="6T7I"/>
<dbReference type="PDBsum" id="6T7T"/>
<dbReference type="PDBsum" id="6T83"/>
<dbReference type="PDBsum" id="6TB3"/>
<dbReference type="PDBsum" id="6TNU"/>
<dbReference type="PDBsum" id="6WOO"/>
<dbReference type="PDBsum" id="6XIQ"/>
<dbReference type="PDBsum" id="6XIR"/>
<dbReference type="PDBsum" id="6YLG"/>
<dbReference type="PDBsum" id="6YLH"/>
<dbReference type="PDBsum" id="6YLX"/>
<dbReference type="PDBsum" id="6YLY"/>
<dbReference type="PDBsum" id="6Z6J"/>
<dbReference type="PDBsum" id="6Z6K"/>
<dbReference type="PDBsum" id="7AZY"/>
<dbReference type="PDBsum" id="7B7D"/>
<dbReference type="PDBsum" id="7BT6"/>
<dbReference type="PDBsum" id="7BTB"/>
<dbReference type="PDBsum" id="7MPI"/>
<dbReference type="PDBsum" id="7MPJ"/>
<dbReference type="PDBsum" id="7N8B"/>
<dbReference type="PDBsum" id="7NAC"/>
<dbReference type="PDBsum" id="7NRC"/>
<dbReference type="PDBsum" id="7NRD"/>
<dbReference type="PDBsum" id="7OF1"/>
<dbReference type="PDBsum" id="7OH3"/>
<dbReference type="PDBsum" id="7OHP"/>
<dbReference type="PDBsum" id="7OHQ"/>
<dbReference type="PDBsum" id="7OHR"/>
<dbReference type="PDBsum" id="7OHS"/>
<dbReference type="PDBsum" id="7OHU"/>
<dbReference type="PDBsum" id="7OHV"/>
<dbReference type="PDBsum" id="7OHW"/>
<dbReference type="PDBsum" id="7OHX"/>
<dbReference type="PDBsum" id="7OHY"/>
<dbReference type="PDBsum" id="7OSA"/>
<dbReference type="PDBsum" id="7OSM"/>
<dbReference type="PDBsum" id="7R6K"/>
<dbReference type="PDBsum" id="7R6Q"/>
<dbReference type="PDBsum" id="7R7A"/>
<dbReference type="PDBsum" id="7RR5"/>
<dbReference type="PDBsum" id="7TOO"/>
<dbReference type="PDBsum" id="7TOP"/>
<dbReference type="PDBsum" id="7U0H"/>
<dbReference type="PDBsum" id="7UG6"/>
<dbReference type="PDBsum" id="7UOO"/>
<dbReference type="PDBsum" id="7UQB"/>
<dbReference type="PDBsum" id="7UQZ"/>
<dbReference type="PDBsum" id="7V08"/>
<dbReference type="PDBsum" id="7Z34"/>
<dbReference type="PDBsum" id="7ZPQ"/>
<dbReference type="PDBsum" id="7ZRS"/>
<dbReference type="PDBsum" id="7ZS5"/>
<dbReference type="PDBsum" id="7ZUW"/>
<dbReference type="PDBsum" id="7ZUX"/>
<dbReference type="PDBsum" id="7ZW0"/>
<dbReference type="PDBsum" id="8AAF"/>
<dbReference type="PDBsum" id="8AGT"/>
<dbReference type="PDBsum" id="8AGU"/>
<dbReference type="PDBsum" id="8AGV"/>
<dbReference type="PDBsum" id="8AGW"/>
<dbReference type="PDBsum" id="8AGX"/>
<dbReference type="PDBsum" id="8AGZ"/>
<dbReference type="PDBsum" id="8BIP"/>
<dbReference type="PDBsum" id="8BJQ"/>
<dbReference type="PDBsum" id="8BN3"/>
<dbReference type="PDBsum" id="8BQD"/>
<dbReference type="PDBsum" id="8BQX"/>
<dbReference type="PDBsum" id="8CCS"/>
<dbReference type="PDBsum" id="8CDL"/>
<dbReference type="PDBsum" id="8CDR"/>
<dbReference type="PDBsum" id="8CEH"/>
<dbReference type="PDBsum" id="8CF5"/>
<dbReference type="PDBsum" id="8CG8"/>
<dbReference type="PDBsum" id="8CGN"/>
<dbReference type="PDBsum" id="8CIV"/>
<dbReference type="PDBsum" id="8CKU"/>
<dbReference type="PDBsum" id="8CMJ"/>
<dbReference type="PDBsum" id="8E5T"/>
<dbReference type="PDBsum" id="8EUB"/>
<dbReference type="PDBsum" id="8EVP"/>
<dbReference type="PDBsum" id="8EVQ"/>
<dbReference type="PDBsum" id="8EVR"/>
<dbReference type="PDBsum" id="8EVS"/>
<dbReference type="PDBsum" id="8EVT"/>
<dbReference type="PDBsum" id="8EWB"/>
<dbReference type="PDBsum" id="8EWC"/>
<dbReference type="PDBsum" id="8HFR"/>
<dbReference type="PDBsum" id="8K2D"/>
<dbReference type="PDBsum" id="8K82"/>
<dbReference type="PDBsum" id="8P4V"/>
<dbReference type="PDBsum" id="8P8M"/>
<dbReference type="PDBsum" id="8P8N"/>
<dbReference type="PDBsum" id="8P8U"/>
<dbReference type="PDBsum" id="8P9A"/>
<dbReference type="PDBsum" id="8PFR"/>
<dbReference type="PDBsum" id="8T2X"/>
<dbReference type="PDBsum" id="8T2Y"/>
<dbReference type="PDBsum" id="8T2Z"/>
<dbReference type="PDBsum" id="8T30"/>
<dbReference type="PDBsum" id="8T3A"/>
<dbReference type="PDBsum" id="8T3B"/>
<dbReference type="PDBsum" id="8T3C"/>
<dbReference type="PDBsum" id="8T3D"/>
<dbReference type="PDBsum" id="8T3E"/>
<dbReference type="PDBsum" id="8T3F"/>
<dbReference type="PDBsum" id="8UT0"/>
<dbReference type="PDBsum" id="8UTI"/>
<dbReference type="PDBsum" id="8V83"/>
<dbReference type="PDBsum" id="8V84"/>
<dbReference type="PDBsum" id="8V87"/>
<dbReference type="PDBsum" id="8XU8"/>
<dbReference type="PDBsum" id="8Y0U"/>
<dbReference type="PDBsum" id="8YLD"/>
<dbReference type="PDBsum" id="8YLR"/>
<dbReference type="PDBsum" id="8Z70"/>
<dbReference type="PDBsum" id="8Z71"/>
<dbReference type="PDBsum" id="9F9S"/>
<dbReference type="EMDB" id="EMD-0047"/>
<dbReference type="EMDB" id="EMD-0048"/>
<dbReference type="EMDB" id="EMD-0049"/>
<dbReference type="EMDB" id="EMD-0202"/>
<dbReference type="EMDB" id="EMD-0369"/>
<dbReference type="EMDB" id="EMD-0370"/>
<dbReference type="EMDB" id="EMD-0371"/>
<dbReference type="EMDB" id="EMD-0372"/>
<dbReference type="EMDB" id="EMD-0373"/>
<dbReference type="EMDB" id="EMD-0374"/>
<dbReference type="EMDB" id="EMD-10068"/>
<dbReference type="EMDB" id="EMD-10071"/>
<dbReference type="EMDB" id="EMD-10098"/>
<dbReference type="EMDB" id="EMD-10262"/>
<dbReference type="EMDB" id="EMD-10315"/>
<dbReference type="EMDB" id="EMD-10377"/>
<dbReference type="EMDB" id="EMD-10396"/>
<dbReference type="EMDB" id="EMD-10397"/>
<dbReference type="EMDB" id="EMD-10398"/>
<dbReference type="EMDB" id="EMD-10431"/>
<dbReference type="EMDB" id="EMD-10537"/>
<dbReference type="EMDB" id="EMD-10838"/>
<dbReference type="EMDB" id="EMD-10839"/>
<dbReference type="EMDB" id="EMD-10841"/>
<dbReference type="EMDB" id="EMD-10842"/>
<dbReference type="EMDB" id="EMD-11096"/>
<dbReference type="EMDB" id="EMD-11097"/>
<dbReference type="EMDB" id="EMD-11951"/>
<dbReference type="EMDB" id="EMD-12081"/>
<dbReference type="EMDB" id="EMD-12534"/>
<dbReference type="EMDB" id="EMD-12535"/>
<dbReference type="EMDB" id="EMD-12866"/>
<dbReference type="EMDB" id="EMD-12892"/>
<dbReference type="EMDB" id="EMD-12904"/>
<dbReference type="EMDB" id="EMD-12905"/>
<dbReference type="EMDB" id="EMD-12906"/>
<dbReference type="EMDB" id="EMD-12907"/>
<dbReference type="EMDB" id="EMD-12909"/>
<dbReference type="EMDB" id="EMD-12910"/>
<dbReference type="EMDB" id="EMD-12911"/>
<dbReference type="EMDB" id="EMD-12912"/>
<dbReference type="EMDB" id="EMD-12913"/>
<dbReference type="EMDB" id="EMD-14471"/>
<dbReference type="EMDB" id="EMD-14861"/>
<dbReference type="EMDB" id="EMD-14921"/>
<dbReference type="EMDB" id="EMD-14926"/>
<dbReference type="EMDB" id="EMD-14979"/>
<dbReference type="EMDB" id="EMD-14990"/>
<dbReference type="EMDB" id="EMD-15296"/>
<dbReference type="EMDB" id="EMD-15423"/>
<dbReference type="EMDB" id="EMD-15424"/>
<dbReference type="EMDB" id="EMD-15425"/>
<dbReference type="EMDB" id="EMD-15426"/>
<dbReference type="EMDB" id="EMD-15427"/>
<dbReference type="EMDB" id="EMD-15428"/>
<dbReference type="EMDB" id="EMD-16086"/>
<dbReference type="EMDB" id="EMD-16090"/>
<dbReference type="EMDB" id="EMD-16182"/>
<dbReference type="EMDB" id="EMD-16191"/>
<dbReference type="EMDB" id="EMD-16563"/>
<dbReference type="EMDB" id="EMD-16591"/>
<dbReference type="EMDB" id="EMD-16594"/>
<dbReference type="EMDB" id="EMD-16609"/>
<dbReference type="EMDB" id="EMD-16616"/>
<dbReference type="EMDB" id="EMD-16634"/>
<dbReference type="EMDB" id="EMD-16648"/>
<dbReference type="EMDB" id="EMD-16684"/>
<dbReference type="EMDB" id="EMD-16702"/>
<dbReference type="EMDB" id="EMD-16729"/>
<dbReference type="EMDB" id="EMD-17549"/>
<dbReference type="EMDB" id="EMD-17550"/>
<dbReference type="EMDB" id="EMD-17552"/>
<dbReference type="EMDB" id="EMD-17653"/>
<dbReference type="EMDB" id="EMD-20077"/>
<dbReference type="EMDB" id="EMD-21859"/>
<dbReference type="EMDB" id="EMD-22196"/>
<dbReference type="EMDB" id="EMD-22198"/>
<dbReference type="EMDB" id="EMD-23934"/>
<dbReference type="EMDB" id="EMD-23935"/>
<dbReference type="EMDB" id="EMD-24235"/>
<dbReference type="EMDB" id="EMD-24269"/>
<dbReference type="EMDB" id="EMD-24280"/>
<dbReference type="EMDB" id="EMD-24286"/>
<dbReference type="EMDB" id="EMD-24296"/>
<dbReference type="EMDB" id="EMD-24652"/>
<dbReference type="EMDB" id="EMD-26033"/>
<dbReference type="EMDB" id="EMD-26034"/>
<dbReference type="EMDB" id="EMD-26259"/>
<dbReference type="EMDB" id="EMD-26485"/>
<dbReference type="EMDB" id="EMD-26651"/>
<dbReference type="EMDB" id="EMD-26686"/>
<dbReference type="EMDB" id="EMD-26703"/>
<dbReference type="EMDB" id="EMD-26941"/>
<dbReference type="EMDB" id="EMD-27919"/>
<dbReference type="EMDB" id="EMD-28610"/>
<dbReference type="EMDB" id="EMD-28632"/>
<dbReference type="EMDB" id="EMD-28633"/>
<dbReference type="EMDB" id="EMD-28634"/>
<dbReference type="EMDB" id="EMD-28635"/>
<dbReference type="EMDB" id="EMD-28636"/>
<dbReference type="EMDB" id="EMD-28642"/>
<dbReference type="EMDB" id="EMD-28643"/>
<dbReference type="EMDB" id="EMD-30108"/>
<dbReference type="EMDB" id="EMD-30170"/>
<dbReference type="EMDB" id="EMD-30174"/>
<dbReference type="EMDB" id="EMD-3461"/>
<dbReference type="EMDB" id="EMD-34725"/>
<dbReference type="EMDB" id="EMD-36839"/>
<dbReference type="EMDB" id="EMD-36945"/>
<dbReference type="EMDB" id="EMD-38660"/>
<dbReference type="EMDB" id="EMD-40990"/>
<dbReference type="EMDB" id="EMD-40991"/>
<dbReference type="EMDB" id="EMD-40992"/>
<dbReference type="EMDB" id="EMD-40993"/>
<dbReference type="EMDB" id="EMD-40997"/>
<dbReference type="EMDB" id="EMD-40998"/>
<dbReference type="EMDB" id="EMD-40999"/>
<dbReference type="EMDB" id="EMD-41000"/>
<dbReference type="EMDB" id="EMD-41001"/>
<dbReference type="EMDB" id="EMD-41002"/>
<dbReference type="EMDB" id="EMD-4140"/>
<dbReference type="EMDB" id="EMD-42525"/>
<dbReference type="EMDB" id="EMD-42540"/>
<dbReference type="EMDB" id="EMD-43017"/>
<dbReference type="EMDB" id="EMD-4302"/>
<dbReference type="EMDB" id="EMD-43021"/>
<dbReference type="EMDB" id="EMD-43027"/>
<dbReference type="EMDB" id="EMD-4427"/>
<dbReference type="EMDB" id="EMD-4474"/>
<dbReference type="EMDB" id="EMD-4560"/>
<dbReference type="EMDB" id="EMD-4630"/>
<dbReference type="EMDB" id="EMD-4636"/>
<dbReference type="EMDB" id="EMD-4751"/>
<dbReference type="EMDB" id="EMD-4752"/>
<dbReference type="EMDB" id="EMD-4753"/>
<dbReference type="EMDB" id="EMD-4884"/>
<dbReference type="EMDB" id="EMD-50259"/>
<dbReference type="EMDB" id="EMD-6878"/>
<dbReference type="EMDB" id="EMD-7324"/>
<dbReference type="EMDB" id="EMD-7445"/>
<dbReference type="EMDB" id="EMD-8362"/>
<dbReference type="EMDB" id="EMD-8368"/>
<dbReference type="SMR" id="P05748"/>
<dbReference type="BioGRID" id="31303">
    <property type="interactions" value="374"/>
</dbReference>
<dbReference type="ComplexPortal" id="CPX-1601">
    <property type="entry name" value="60S cytosolic large ribosomal subunit"/>
</dbReference>
<dbReference type="FunCoup" id="P05748">
    <property type="interactions" value="1488"/>
</dbReference>
<dbReference type="IntAct" id="P05748">
    <property type="interactions" value="115"/>
</dbReference>
<dbReference type="MINT" id="P05748"/>
<dbReference type="STRING" id="4932.YLR029C"/>
<dbReference type="iPTMnet" id="P05748"/>
<dbReference type="PaxDb" id="4932-YLR029C"/>
<dbReference type="PeptideAtlas" id="P05748"/>
<dbReference type="EnsemblFungi" id="YLR029C_mRNA">
    <property type="protein sequence ID" value="YLR029C"/>
    <property type="gene ID" value="YLR029C"/>
</dbReference>
<dbReference type="GeneID" id="850716"/>
<dbReference type="KEGG" id="sce:YLR029C"/>
<dbReference type="AGR" id="SGD:S000004019"/>
<dbReference type="SGD" id="S000004019">
    <property type="gene designation" value="RPL15A"/>
</dbReference>
<dbReference type="VEuPathDB" id="FungiDB:YLR029C"/>
<dbReference type="eggNOG" id="KOG1678">
    <property type="taxonomic scope" value="Eukaryota"/>
</dbReference>
<dbReference type="GeneTree" id="ENSGT00910000144184"/>
<dbReference type="HOGENOM" id="CLU_080796_0_0_1"/>
<dbReference type="InParanoid" id="P05748"/>
<dbReference type="OMA" id="YIRDAWK"/>
<dbReference type="OrthoDB" id="10255148at2759"/>
<dbReference type="BioCyc" id="YEAST:G3O-32188-MONOMER"/>
<dbReference type="Reactome" id="R-SCE-156827">
    <property type="pathway name" value="L13a-mediated translational silencing of Ceruloplasmin expression"/>
</dbReference>
<dbReference type="Reactome" id="R-SCE-1799339">
    <property type="pathway name" value="SRP-dependent cotranslational protein targeting to membrane"/>
</dbReference>
<dbReference type="Reactome" id="R-SCE-72689">
    <property type="pathway name" value="Formation of a pool of free 40S subunits"/>
</dbReference>
<dbReference type="Reactome" id="R-SCE-72706">
    <property type="pathway name" value="GTP hydrolysis and joining of the 60S ribosomal subunit"/>
</dbReference>
<dbReference type="Reactome" id="R-SCE-975956">
    <property type="pathway name" value="Nonsense Mediated Decay (NMD) independent of the Exon Junction Complex (EJC)"/>
</dbReference>
<dbReference type="Reactome" id="R-SCE-975957">
    <property type="pathway name" value="Nonsense Mediated Decay (NMD) enhanced by the Exon Junction Complex (EJC)"/>
</dbReference>
<dbReference type="BioGRID-ORCS" id="850716">
    <property type="hits" value="8 hits in 10 CRISPR screens"/>
</dbReference>
<dbReference type="PRO" id="PR:P05748"/>
<dbReference type="Proteomes" id="UP000002311">
    <property type="component" value="Chromosome XII"/>
</dbReference>
<dbReference type="RNAct" id="P05748">
    <property type="molecule type" value="protein"/>
</dbReference>
<dbReference type="GO" id="GO:0005829">
    <property type="term" value="C:cytosol"/>
    <property type="evidence" value="ECO:0000304"/>
    <property type="project" value="Reactome"/>
</dbReference>
<dbReference type="GO" id="GO:0022625">
    <property type="term" value="C:cytosolic large ribosomal subunit"/>
    <property type="evidence" value="ECO:0000314"/>
    <property type="project" value="SGD"/>
</dbReference>
<dbReference type="GO" id="GO:0003723">
    <property type="term" value="F:RNA binding"/>
    <property type="evidence" value="ECO:0000314"/>
    <property type="project" value="SGD"/>
</dbReference>
<dbReference type="GO" id="GO:0003735">
    <property type="term" value="F:structural constituent of ribosome"/>
    <property type="evidence" value="ECO:0000314"/>
    <property type="project" value="SGD"/>
</dbReference>
<dbReference type="GO" id="GO:0002181">
    <property type="term" value="P:cytoplasmic translation"/>
    <property type="evidence" value="ECO:0000314"/>
    <property type="project" value="SGD"/>
</dbReference>
<dbReference type="FunFam" id="3.40.1120.10:FF:000001">
    <property type="entry name" value="Ribosomal protein L15"/>
    <property type="match status" value="1"/>
</dbReference>
<dbReference type="Gene3D" id="3.40.1120.10">
    <property type="entry name" value="Ribosomal protein l15e"/>
    <property type="match status" value="1"/>
</dbReference>
<dbReference type="InterPro" id="IPR024794">
    <property type="entry name" value="Rbsml_eL15_core_dom_sf"/>
</dbReference>
<dbReference type="InterPro" id="IPR000439">
    <property type="entry name" value="Ribosomal_eL15"/>
</dbReference>
<dbReference type="InterPro" id="IPR020925">
    <property type="entry name" value="Ribosomal_eL15_CS"/>
</dbReference>
<dbReference type="InterPro" id="IPR012678">
    <property type="entry name" value="Ribosomal_uL23/eL15/eS24_sf"/>
</dbReference>
<dbReference type="NCBIfam" id="NF003269">
    <property type="entry name" value="PRK04243.1"/>
    <property type="match status" value="1"/>
</dbReference>
<dbReference type="PANTHER" id="PTHR11847:SF4">
    <property type="entry name" value="LARGE RIBOSOMAL SUBUNIT PROTEIN EL15"/>
    <property type="match status" value="1"/>
</dbReference>
<dbReference type="PANTHER" id="PTHR11847">
    <property type="entry name" value="RIBOSOMAL PROTEIN L15"/>
    <property type="match status" value="1"/>
</dbReference>
<dbReference type="Pfam" id="PF00827">
    <property type="entry name" value="Ribosomal_L15e"/>
    <property type="match status" value="1"/>
</dbReference>
<dbReference type="SMART" id="SM01384">
    <property type="entry name" value="Ribosomal_L15e"/>
    <property type="match status" value="1"/>
</dbReference>
<dbReference type="SUPFAM" id="SSF54189">
    <property type="entry name" value="Ribosomal proteins S24e, L23 and L15e"/>
    <property type="match status" value="1"/>
</dbReference>
<dbReference type="PROSITE" id="PS01194">
    <property type="entry name" value="RIBOSOMAL_L15E"/>
    <property type="match status" value="1"/>
</dbReference>
<feature type="initiator methionine" description="Removed" evidence="2 4">
    <location>
        <position position="1"/>
    </location>
</feature>
<feature type="chain" id="PRO_0000127566" description="Large ribosomal subunit protein eL15A">
    <location>
        <begin position="2"/>
        <end position="204"/>
    </location>
</feature>
<feature type="region of interest" description="Disordered" evidence="1">
    <location>
        <begin position="164"/>
        <end position="185"/>
    </location>
</feature>
<feature type="compositionally biased region" description="Basic residues" evidence="1">
    <location>
        <begin position="169"/>
        <end position="185"/>
    </location>
</feature>
<feature type="sequence conflict" description="In Ref. 4; AA sequence." evidence="7" ref="4">
    <original>W</original>
    <variation>G</variation>
    <location>
        <position position="28"/>
    </location>
</feature>
<feature type="helix" evidence="12">
    <location>
        <begin position="4"/>
        <end position="11"/>
    </location>
</feature>
<feature type="strand" evidence="11">
    <location>
        <begin position="14"/>
        <end position="16"/>
    </location>
</feature>
<feature type="helix" evidence="12">
    <location>
        <begin position="17"/>
        <end position="31"/>
    </location>
</feature>
<feature type="strand" evidence="12">
    <location>
        <begin position="35"/>
        <end position="38"/>
    </location>
</feature>
<feature type="helix" evidence="12">
    <location>
        <begin position="45"/>
        <end position="51"/>
    </location>
</feature>
<feature type="strand" evidence="12">
    <location>
        <begin position="59"/>
        <end position="67"/>
    </location>
</feature>
<feature type="strand" evidence="11">
    <location>
        <begin position="70"/>
        <end position="74"/>
    </location>
</feature>
<feature type="helix" evidence="12">
    <location>
        <begin position="98"/>
        <end position="109"/>
    </location>
</feature>
<feature type="strand" evidence="12">
    <location>
        <begin position="113"/>
        <end position="123"/>
    </location>
</feature>
<feature type="strand" evidence="12">
    <location>
        <begin position="125"/>
        <end position="135"/>
    </location>
</feature>
<feature type="strand" evidence="10">
    <location>
        <begin position="137"/>
        <end position="139"/>
    </location>
</feature>
<feature type="helix" evidence="12">
    <location>
        <begin position="140"/>
        <end position="143"/>
    </location>
</feature>
<feature type="turn" evidence="12">
    <location>
        <begin position="146"/>
        <end position="152"/>
    </location>
</feature>
<feature type="helix" evidence="10">
    <location>
        <begin position="154"/>
        <end position="156"/>
    </location>
</feature>
<feature type="turn" evidence="11">
    <location>
        <begin position="160"/>
        <end position="163"/>
    </location>
</feature>
<feature type="helix" evidence="11">
    <location>
        <begin position="166"/>
        <end position="172"/>
    </location>
</feature>
<feature type="strand" evidence="10">
    <location>
        <begin position="175"/>
        <end position="178"/>
    </location>
</feature>
<feature type="helix" evidence="10">
    <location>
        <begin position="187"/>
        <end position="194"/>
    </location>
</feature>
<feature type="strand" evidence="10">
    <location>
        <begin position="198"/>
        <end position="202"/>
    </location>
</feature>
<gene>
    <name evidence="6" type="primary">RPL15A</name>
    <name type="synonym">RPL10A</name>
    <name type="synonym">RPL13A</name>
    <name type="synonym">YL10A</name>
    <name type="ordered locus">YLR029C</name>
</gene>
<protein>
    <recommendedName>
        <fullName evidence="5">Large ribosomal subunit protein eL15A</fullName>
    </recommendedName>
    <alternativeName>
        <fullName evidence="6">60S ribosomal protein L15-A</fullName>
    </alternativeName>
    <alternativeName>
        <fullName>L13</fullName>
    </alternativeName>
    <alternativeName>
        <fullName>RP15R</fullName>
    </alternativeName>
    <alternativeName>
        <fullName>YL10</fullName>
    </alternativeName>
    <alternativeName>
        <fullName>YP18</fullName>
    </alternativeName>
</protein>
<evidence type="ECO:0000256" key="1">
    <source>
        <dbReference type="SAM" id="MobiDB-lite"/>
    </source>
</evidence>
<evidence type="ECO:0000269" key="2">
    <source>
    </source>
</evidence>
<evidence type="ECO:0000269" key="3">
    <source>
    </source>
</evidence>
<evidence type="ECO:0000269" key="4">
    <source>
    </source>
</evidence>
<evidence type="ECO:0000303" key="5">
    <source>
    </source>
</evidence>
<evidence type="ECO:0000303" key="6">
    <source>
    </source>
</evidence>
<evidence type="ECO:0000305" key="7"/>
<evidence type="ECO:0000305" key="8">
    <source>
    </source>
</evidence>
<evidence type="ECO:0000305" key="9">
    <source>
    </source>
</evidence>
<evidence type="ECO:0007829" key="10">
    <source>
        <dbReference type="PDB" id="6EM3"/>
    </source>
</evidence>
<evidence type="ECO:0007829" key="11">
    <source>
        <dbReference type="PDB" id="7R6K"/>
    </source>
</evidence>
<evidence type="ECO:0007829" key="12">
    <source>
        <dbReference type="PDB" id="7R6Q"/>
    </source>
</evidence>